<sequence length="510" mass="54897">MTSTVTQQASGPSPDRSARTFEVRTYGCQMNVHDSERLAGLLEGAGYRRAGEGADADIVVFNTCAVRENADNKLYGNLSHLAPRKQSDPDMQIAVGGCLAQKDRDSVLRKAPWVDVVFGTHNIGSLPALLDRARHNRVAQVEIAEALQEFPSALPASRESSYAAWVSISVGCNNTCTFCIVPALRGREVDRRPGDVLAEVQSLVDQGVLEITLLGQNVNAYGVSFADPTEPRDRGAFAKLLRACGRIDGLERVRFTSPHPAEFTDDVIEAMAETPNVCPTLHMPLQSGSDRILRAMRRSYRAERYLGIIDRVRAAIPHAAITTDLIVGFPGETEEDFQATLDVVAASRFSSAFTFQYSKRPGTPAAELADQVPKAVVSERYQRLIELQERISLEENTAQIGRRVELLVATGEGRKDAATARMSGRARDGRLVHFAPGAVGSEVRPGDVVVTTVTGAAPHHLIADAGLIEHRRTRAGDAHAAGQKPRTGVGLGMPAVGAPDPLPATTGCAR</sequence>
<comment type="function">
    <text evidence="1">Catalyzes the methylthiolation of N6-(dimethylallyl)adenosine (i(6)A), leading to the formation of 2-methylthio-N6-(dimethylallyl)adenosine (ms(2)i(6)A) at position 37 in tRNAs that read codons beginning with uridine.</text>
</comment>
<comment type="catalytic activity">
    <reaction evidence="1">
        <text>N(6)-dimethylallyladenosine(37) in tRNA + (sulfur carrier)-SH + AH2 + 2 S-adenosyl-L-methionine = 2-methylsulfanyl-N(6)-dimethylallyladenosine(37) in tRNA + (sulfur carrier)-H + 5'-deoxyadenosine + L-methionine + A + S-adenosyl-L-homocysteine + 2 H(+)</text>
        <dbReference type="Rhea" id="RHEA:37067"/>
        <dbReference type="Rhea" id="RHEA-COMP:10375"/>
        <dbReference type="Rhea" id="RHEA-COMP:10376"/>
        <dbReference type="Rhea" id="RHEA-COMP:14737"/>
        <dbReference type="Rhea" id="RHEA-COMP:14739"/>
        <dbReference type="ChEBI" id="CHEBI:13193"/>
        <dbReference type="ChEBI" id="CHEBI:15378"/>
        <dbReference type="ChEBI" id="CHEBI:17319"/>
        <dbReference type="ChEBI" id="CHEBI:17499"/>
        <dbReference type="ChEBI" id="CHEBI:29917"/>
        <dbReference type="ChEBI" id="CHEBI:57844"/>
        <dbReference type="ChEBI" id="CHEBI:57856"/>
        <dbReference type="ChEBI" id="CHEBI:59789"/>
        <dbReference type="ChEBI" id="CHEBI:64428"/>
        <dbReference type="ChEBI" id="CHEBI:74415"/>
        <dbReference type="ChEBI" id="CHEBI:74417"/>
        <dbReference type="EC" id="2.8.4.3"/>
    </reaction>
</comment>
<comment type="cofactor">
    <cofactor evidence="1">
        <name>[4Fe-4S] cluster</name>
        <dbReference type="ChEBI" id="CHEBI:49883"/>
    </cofactor>
    <text evidence="1">Binds 2 [4Fe-4S] clusters. One cluster is coordinated with 3 cysteines and an exchangeable S-adenosyl-L-methionine.</text>
</comment>
<comment type="subunit">
    <text evidence="1">Monomer.</text>
</comment>
<comment type="subcellular location">
    <subcellularLocation>
        <location evidence="1">Cytoplasm</location>
    </subcellularLocation>
</comment>
<comment type="similarity">
    <text evidence="1">Belongs to the methylthiotransferase family. MiaB subfamily.</text>
</comment>
<name>MIAB_MYCVP</name>
<gene>
    <name evidence="1" type="primary">miaB</name>
    <name type="ordered locus">Mvan_2429</name>
</gene>
<proteinExistence type="inferred from homology"/>
<feature type="chain" id="PRO_0000374396" description="tRNA-2-methylthio-N(6)-dimethylallyladenosine synthase">
    <location>
        <begin position="1"/>
        <end position="510"/>
    </location>
</feature>
<feature type="domain" description="MTTase N-terminal" evidence="1">
    <location>
        <begin position="19"/>
        <end position="135"/>
    </location>
</feature>
<feature type="domain" description="Radical SAM core" evidence="2">
    <location>
        <begin position="158"/>
        <end position="394"/>
    </location>
</feature>
<feature type="domain" description="TRAM" evidence="1">
    <location>
        <begin position="397"/>
        <end position="467"/>
    </location>
</feature>
<feature type="region of interest" description="Disordered" evidence="3">
    <location>
        <begin position="477"/>
        <end position="510"/>
    </location>
</feature>
<feature type="binding site" evidence="1">
    <location>
        <position position="28"/>
    </location>
    <ligand>
        <name>[4Fe-4S] cluster</name>
        <dbReference type="ChEBI" id="CHEBI:49883"/>
        <label>1</label>
    </ligand>
</feature>
<feature type="binding site" evidence="1">
    <location>
        <position position="64"/>
    </location>
    <ligand>
        <name>[4Fe-4S] cluster</name>
        <dbReference type="ChEBI" id="CHEBI:49883"/>
        <label>1</label>
    </ligand>
</feature>
<feature type="binding site" evidence="1">
    <location>
        <position position="98"/>
    </location>
    <ligand>
        <name>[4Fe-4S] cluster</name>
        <dbReference type="ChEBI" id="CHEBI:49883"/>
        <label>1</label>
    </ligand>
</feature>
<feature type="binding site" evidence="1">
    <location>
        <position position="172"/>
    </location>
    <ligand>
        <name>[4Fe-4S] cluster</name>
        <dbReference type="ChEBI" id="CHEBI:49883"/>
        <label>2</label>
        <note>4Fe-4S-S-AdoMet</note>
    </ligand>
</feature>
<feature type="binding site" evidence="1">
    <location>
        <position position="176"/>
    </location>
    <ligand>
        <name>[4Fe-4S] cluster</name>
        <dbReference type="ChEBI" id="CHEBI:49883"/>
        <label>2</label>
        <note>4Fe-4S-S-AdoMet</note>
    </ligand>
</feature>
<feature type="binding site" evidence="1">
    <location>
        <position position="179"/>
    </location>
    <ligand>
        <name>[4Fe-4S] cluster</name>
        <dbReference type="ChEBI" id="CHEBI:49883"/>
        <label>2</label>
        <note>4Fe-4S-S-AdoMet</note>
    </ligand>
</feature>
<evidence type="ECO:0000255" key="1">
    <source>
        <dbReference type="HAMAP-Rule" id="MF_01864"/>
    </source>
</evidence>
<evidence type="ECO:0000255" key="2">
    <source>
        <dbReference type="PROSITE-ProRule" id="PRU01266"/>
    </source>
</evidence>
<evidence type="ECO:0000256" key="3">
    <source>
        <dbReference type="SAM" id="MobiDB-lite"/>
    </source>
</evidence>
<dbReference type="EC" id="2.8.4.3" evidence="1"/>
<dbReference type="EMBL" id="CP000511">
    <property type="protein sequence ID" value="ABM13242.1"/>
    <property type="molecule type" value="Genomic_DNA"/>
</dbReference>
<dbReference type="RefSeq" id="WP_011779654.1">
    <property type="nucleotide sequence ID" value="NC_008726.1"/>
</dbReference>
<dbReference type="SMR" id="A1T7U2"/>
<dbReference type="STRING" id="350058.Mvan_2429"/>
<dbReference type="KEGG" id="mva:Mvan_2429"/>
<dbReference type="eggNOG" id="COG0621">
    <property type="taxonomic scope" value="Bacteria"/>
</dbReference>
<dbReference type="HOGENOM" id="CLU_018697_2_2_11"/>
<dbReference type="Proteomes" id="UP000009159">
    <property type="component" value="Chromosome"/>
</dbReference>
<dbReference type="GO" id="GO:0005829">
    <property type="term" value="C:cytosol"/>
    <property type="evidence" value="ECO:0007669"/>
    <property type="project" value="TreeGrafter"/>
</dbReference>
<dbReference type="GO" id="GO:0051539">
    <property type="term" value="F:4 iron, 4 sulfur cluster binding"/>
    <property type="evidence" value="ECO:0007669"/>
    <property type="project" value="UniProtKB-UniRule"/>
</dbReference>
<dbReference type="GO" id="GO:0046872">
    <property type="term" value="F:metal ion binding"/>
    <property type="evidence" value="ECO:0007669"/>
    <property type="project" value="UniProtKB-KW"/>
</dbReference>
<dbReference type="GO" id="GO:0035597">
    <property type="term" value="F:N6-isopentenyladenosine methylthiotransferase activity"/>
    <property type="evidence" value="ECO:0007669"/>
    <property type="project" value="TreeGrafter"/>
</dbReference>
<dbReference type="CDD" id="cd01335">
    <property type="entry name" value="Radical_SAM"/>
    <property type="match status" value="1"/>
</dbReference>
<dbReference type="FunFam" id="3.40.50.12160:FF:000003">
    <property type="entry name" value="CDK5 regulatory subunit-associated protein 1"/>
    <property type="match status" value="1"/>
</dbReference>
<dbReference type="FunFam" id="3.80.30.20:FF:000001">
    <property type="entry name" value="tRNA-2-methylthio-N(6)-dimethylallyladenosine synthase 2"/>
    <property type="match status" value="1"/>
</dbReference>
<dbReference type="Gene3D" id="3.40.50.12160">
    <property type="entry name" value="Methylthiotransferase, N-terminal domain"/>
    <property type="match status" value="1"/>
</dbReference>
<dbReference type="Gene3D" id="3.80.30.20">
    <property type="entry name" value="tm_1862 like domain"/>
    <property type="match status" value="1"/>
</dbReference>
<dbReference type="HAMAP" id="MF_01864">
    <property type="entry name" value="tRNA_metthiotr_MiaB"/>
    <property type="match status" value="1"/>
</dbReference>
<dbReference type="InterPro" id="IPR006638">
    <property type="entry name" value="Elp3/MiaA/NifB-like_rSAM"/>
</dbReference>
<dbReference type="InterPro" id="IPR005839">
    <property type="entry name" value="Methylthiotransferase"/>
</dbReference>
<dbReference type="InterPro" id="IPR020612">
    <property type="entry name" value="Methylthiotransferase_CS"/>
</dbReference>
<dbReference type="InterPro" id="IPR013848">
    <property type="entry name" value="Methylthiotransferase_N"/>
</dbReference>
<dbReference type="InterPro" id="IPR038135">
    <property type="entry name" value="Methylthiotransferase_N_sf"/>
</dbReference>
<dbReference type="InterPro" id="IPR006463">
    <property type="entry name" value="MiaB_methiolase"/>
</dbReference>
<dbReference type="InterPro" id="IPR007197">
    <property type="entry name" value="rSAM"/>
</dbReference>
<dbReference type="InterPro" id="IPR023404">
    <property type="entry name" value="rSAM_horseshoe"/>
</dbReference>
<dbReference type="InterPro" id="IPR002792">
    <property type="entry name" value="TRAM_dom"/>
</dbReference>
<dbReference type="NCBIfam" id="TIGR01574">
    <property type="entry name" value="miaB-methiolase"/>
    <property type="match status" value="1"/>
</dbReference>
<dbReference type="NCBIfam" id="TIGR00089">
    <property type="entry name" value="MiaB/RimO family radical SAM methylthiotransferase"/>
    <property type="match status" value="1"/>
</dbReference>
<dbReference type="PANTHER" id="PTHR43020">
    <property type="entry name" value="CDK5 REGULATORY SUBUNIT-ASSOCIATED PROTEIN 1"/>
    <property type="match status" value="1"/>
</dbReference>
<dbReference type="PANTHER" id="PTHR43020:SF2">
    <property type="entry name" value="MITOCHONDRIAL TRNA METHYLTHIOTRANSFERASE CDK5RAP1"/>
    <property type="match status" value="1"/>
</dbReference>
<dbReference type="Pfam" id="PF04055">
    <property type="entry name" value="Radical_SAM"/>
    <property type="match status" value="1"/>
</dbReference>
<dbReference type="Pfam" id="PF00919">
    <property type="entry name" value="UPF0004"/>
    <property type="match status" value="1"/>
</dbReference>
<dbReference type="SFLD" id="SFLDF00273">
    <property type="entry name" value="(dimethylallyl)adenosine_tRNA"/>
    <property type="match status" value="1"/>
</dbReference>
<dbReference type="SFLD" id="SFLDG01082">
    <property type="entry name" value="B12-binding_domain_containing"/>
    <property type="match status" value="1"/>
</dbReference>
<dbReference type="SFLD" id="SFLDG01061">
    <property type="entry name" value="methylthiotransferase"/>
    <property type="match status" value="1"/>
</dbReference>
<dbReference type="SMART" id="SM00729">
    <property type="entry name" value="Elp3"/>
    <property type="match status" value="1"/>
</dbReference>
<dbReference type="SUPFAM" id="SSF102114">
    <property type="entry name" value="Radical SAM enzymes"/>
    <property type="match status" value="1"/>
</dbReference>
<dbReference type="PROSITE" id="PS51449">
    <property type="entry name" value="MTTASE_N"/>
    <property type="match status" value="1"/>
</dbReference>
<dbReference type="PROSITE" id="PS01278">
    <property type="entry name" value="MTTASE_RADICAL"/>
    <property type="match status" value="1"/>
</dbReference>
<dbReference type="PROSITE" id="PS51918">
    <property type="entry name" value="RADICAL_SAM"/>
    <property type="match status" value="1"/>
</dbReference>
<dbReference type="PROSITE" id="PS50926">
    <property type="entry name" value="TRAM"/>
    <property type="match status" value="1"/>
</dbReference>
<protein>
    <recommendedName>
        <fullName evidence="1">tRNA-2-methylthio-N(6)-dimethylallyladenosine synthase</fullName>
        <ecNumber evidence="1">2.8.4.3</ecNumber>
    </recommendedName>
    <alternativeName>
        <fullName evidence="1">(Dimethylallyl)adenosine tRNA methylthiotransferase MiaB</fullName>
    </alternativeName>
    <alternativeName>
        <fullName evidence="1">tRNA-i(6)A37 methylthiotransferase</fullName>
    </alternativeName>
</protein>
<accession>A1T7U2</accession>
<reference key="1">
    <citation type="submission" date="2006-12" db="EMBL/GenBank/DDBJ databases">
        <title>Complete sequence of Mycobacterium vanbaalenii PYR-1.</title>
        <authorList>
            <consortium name="US DOE Joint Genome Institute"/>
            <person name="Copeland A."/>
            <person name="Lucas S."/>
            <person name="Lapidus A."/>
            <person name="Barry K."/>
            <person name="Detter J.C."/>
            <person name="Glavina del Rio T."/>
            <person name="Hammon N."/>
            <person name="Israni S."/>
            <person name="Dalin E."/>
            <person name="Tice H."/>
            <person name="Pitluck S."/>
            <person name="Singan V."/>
            <person name="Schmutz J."/>
            <person name="Larimer F."/>
            <person name="Land M."/>
            <person name="Hauser L."/>
            <person name="Kyrpides N."/>
            <person name="Anderson I.J."/>
            <person name="Miller C."/>
            <person name="Richardson P."/>
        </authorList>
    </citation>
    <scope>NUCLEOTIDE SEQUENCE [LARGE SCALE GENOMIC DNA]</scope>
    <source>
        <strain>DSM 7251 / JCM 13017 / BCRC 16820 / KCTC 9966 / NRRL B-24157 / PYR-1</strain>
    </source>
</reference>
<organism>
    <name type="scientific">Mycolicibacterium vanbaalenii (strain DSM 7251 / JCM 13017 / BCRC 16820 / KCTC 9966 / NRRL B-24157 / PYR-1)</name>
    <name type="common">Mycobacterium vanbaalenii</name>
    <dbReference type="NCBI Taxonomy" id="350058"/>
    <lineage>
        <taxon>Bacteria</taxon>
        <taxon>Bacillati</taxon>
        <taxon>Actinomycetota</taxon>
        <taxon>Actinomycetes</taxon>
        <taxon>Mycobacteriales</taxon>
        <taxon>Mycobacteriaceae</taxon>
        <taxon>Mycolicibacterium</taxon>
    </lineage>
</organism>
<keyword id="KW-0004">4Fe-4S</keyword>
<keyword id="KW-0963">Cytoplasm</keyword>
<keyword id="KW-0408">Iron</keyword>
<keyword id="KW-0411">Iron-sulfur</keyword>
<keyword id="KW-0479">Metal-binding</keyword>
<keyword id="KW-0949">S-adenosyl-L-methionine</keyword>
<keyword id="KW-0808">Transferase</keyword>
<keyword id="KW-0819">tRNA processing</keyword>